<evidence type="ECO:0000250" key="1"/>
<evidence type="ECO:0000250" key="2">
    <source>
        <dbReference type="UniProtKB" id="P20797"/>
    </source>
</evidence>
<evidence type="ECO:0000250" key="3">
    <source>
        <dbReference type="UniProtKB" id="Q8WP90"/>
    </source>
</evidence>
<evidence type="ECO:0000255" key="4"/>
<evidence type="ECO:0000312" key="5">
    <source>
        <dbReference type="EMBL" id="AAL51116.1"/>
    </source>
</evidence>
<dbReference type="EMBL" id="AF427890">
    <property type="protein sequence ID" value="AAL51116.1"/>
    <property type="molecule type" value="Genomic_DNA"/>
</dbReference>
<dbReference type="SMR" id="Q7KF17"/>
<dbReference type="GO" id="GO:0005615">
    <property type="term" value="C:extracellular space"/>
    <property type="evidence" value="ECO:0000250"/>
    <property type="project" value="UniProtKB"/>
</dbReference>
<dbReference type="GO" id="GO:0005550">
    <property type="term" value="F:pheromone binding"/>
    <property type="evidence" value="ECO:0007669"/>
    <property type="project" value="UniProtKB-KW"/>
</dbReference>
<dbReference type="GO" id="GO:0019236">
    <property type="term" value="P:response to pheromone"/>
    <property type="evidence" value="ECO:0007669"/>
    <property type="project" value="UniProtKB-KW"/>
</dbReference>
<dbReference type="GO" id="GO:0035176">
    <property type="term" value="P:social behavior"/>
    <property type="evidence" value="ECO:0000250"/>
    <property type="project" value="UniProtKB"/>
</dbReference>
<dbReference type="CDD" id="cd23992">
    <property type="entry name" value="PBP_GOBP"/>
    <property type="match status" value="1"/>
</dbReference>
<dbReference type="FunFam" id="1.10.238.20:FF:000004">
    <property type="entry name" value="Pheromone-binding protein Gp-9"/>
    <property type="match status" value="1"/>
</dbReference>
<dbReference type="Gene3D" id="1.10.238.20">
    <property type="entry name" value="Pheromone/general odorant binding protein domain"/>
    <property type="match status" value="1"/>
</dbReference>
<dbReference type="InterPro" id="IPR006170">
    <property type="entry name" value="PBP/GOBP"/>
</dbReference>
<dbReference type="InterPro" id="IPR036728">
    <property type="entry name" value="PBP_GOBP_sf"/>
</dbReference>
<dbReference type="InterPro" id="IPR022354">
    <property type="entry name" value="Pheromone-bd_protein_Gp-9"/>
</dbReference>
<dbReference type="Pfam" id="PF01395">
    <property type="entry name" value="PBP_GOBP"/>
    <property type="match status" value="1"/>
</dbReference>
<dbReference type="PRINTS" id="PR02007">
    <property type="entry name" value="ODORANTBPGP9"/>
</dbReference>
<dbReference type="SUPFAM" id="SSF47565">
    <property type="entry name" value="Insect pheromone/odorant-binding proteins"/>
    <property type="match status" value="1"/>
</dbReference>
<sequence>MKTFVLHIFIFAFVAFASASRDSAKKIGSQYDNYETCLTEHGLTDDDIFSIGEVSSGQHKTNHEDTELHKNGCVMQCMLEKDGLMSGADYDEEKMREDYIKETGAQPGDQRIEALNTCMQETKDMEDKCDKSLILVACVLAAEAVLADSSEGA</sequence>
<proteinExistence type="inferred from homology"/>
<comment type="function">
    <text evidence="3">Colony queen number, a major feature of social organization, is associated with worker genotype for Gp-9. Colonies are headed by either a single reproductive queen (monogyne form) or multiple queens (polygyne form). Differences in worker Gp-9 genotypes between social forms may cause differences in workers' abilities to recognize queens and regulate their numbers (By similarity).</text>
</comment>
<comment type="subunit">
    <text evidence="2">Homodimer.</text>
</comment>
<comment type="subcellular location">
    <subcellularLocation>
        <location evidence="1">Secreted</location>
    </subcellularLocation>
</comment>
<comment type="similarity">
    <text evidence="4">Belongs to the PBP/GOBP family.</text>
</comment>
<protein>
    <recommendedName>
        <fullName>Pheromone-binding protein Gp-9</fullName>
        <shortName>PBP</shortName>
    </recommendedName>
    <alternativeName>
        <fullName>Putative odorant-binding protein Gp-9</fullName>
    </alternativeName>
</protein>
<organism>
    <name type="scientific">Solenopsis aurea</name>
    <name type="common">Desert fire ant</name>
    <dbReference type="NCBI Taxonomy" id="176591"/>
    <lineage>
        <taxon>Eukaryota</taxon>
        <taxon>Metazoa</taxon>
        <taxon>Ecdysozoa</taxon>
        <taxon>Arthropoda</taxon>
        <taxon>Hexapoda</taxon>
        <taxon>Insecta</taxon>
        <taxon>Pterygota</taxon>
        <taxon>Neoptera</taxon>
        <taxon>Endopterygota</taxon>
        <taxon>Hymenoptera</taxon>
        <taxon>Apocrita</taxon>
        <taxon>Aculeata</taxon>
        <taxon>Formicoidea</taxon>
        <taxon>Formicidae</taxon>
        <taxon>Myrmicinae</taxon>
        <taxon>Solenopsis</taxon>
    </lineage>
</organism>
<gene>
    <name evidence="5" type="primary">Gp-9</name>
</gene>
<feature type="signal peptide" evidence="3">
    <location>
        <begin position="1"/>
        <end position="19"/>
    </location>
</feature>
<feature type="chain" id="PRO_5000061686" description="Pheromone-binding protein Gp-9" evidence="3">
    <location>
        <begin position="20"/>
        <end position="153"/>
    </location>
</feature>
<feature type="disulfide bond" evidence="2">
    <location>
        <begin position="37"/>
        <end position="77"/>
    </location>
</feature>
<feature type="disulfide bond" evidence="2">
    <location>
        <begin position="73"/>
        <end position="129"/>
    </location>
</feature>
<feature type="disulfide bond" evidence="2">
    <location>
        <begin position="118"/>
        <end position="138"/>
    </location>
</feature>
<keyword id="KW-0085">Behavior</keyword>
<keyword id="KW-1015">Disulfide bond</keyword>
<keyword id="KW-0589">Pheromone response</keyword>
<keyword id="KW-0590">Pheromone-binding</keyword>
<keyword id="KW-0964">Secreted</keyword>
<keyword id="KW-0732">Signal</keyword>
<keyword id="KW-0813">Transport</keyword>
<name>PBGP9_SOLAU</name>
<reference evidence="5" key="1">
    <citation type="journal article" date="2002" name="Science">
        <title>Identification of a major gene regulating complex social behavior.</title>
        <authorList>
            <person name="Krieger M.J.B."/>
            <person name="Ross K.G."/>
        </authorList>
    </citation>
    <scope>NUCLEOTIDE SEQUENCE [GENOMIC DNA]</scope>
</reference>
<accession>Q7KF17</accession>